<evidence type="ECO:0000250" key="1">
    <source>
        <dbReference type="UniProtKB" id="P0A9S1"/>
    </source>
</evidence>
<evidence type="ECO:0000250" key="2">
    <source>
        <dbReference type="UniProtKB" id="Q59104"/>
    </source>
</evidence>
<evidence type="ECO:0000269" key="3">
    <source>
    </source>
</evidence>
<evidence type="ECO:0000269" key="4">
    <source>
    </source>
</evidence>
<evidence type="ECO:0000269" key="5">
    <source>
    </source>
</evidence>
<evidence type="ECO:0000269" key="6">
    <source>
    </source>
</evidence>
<evidence type="ECO:0000303" key="7">
    <source>
    </source>
</evidence>
<evidence type="ECO:0000303" key="8">
    <source>
    </source>
</evidence>
<evidence type="ECO:0000303" key="9">
    <source>
    </source>
</evidence>
<evidence type="ECO:0000305" key="10"/>
<name>4HBDH_CLOK5</name>
<keyword id="KW-0186">Copper</keyword>
<keyword id="KW-0408">Iron</keyword>
<keyword id="KW-0479">Metal-binding</keyword>
<keyword id="KW-0520">NAD</keyword>
<keyword id="KW-0547">Nucleotide-binding</keyword>
<keyword id="KW-0560">Oxidoreductase</keyword>
<keyword id="KW-1185">Reference proteome</keyword>
<proteinExistence type="evidence at protein level"/>
<comment type="function">
    <text evidence="3 4 5 6">Involved in the anaerobic succinate degradation pathway (PubMed:8328804, PubMed:8444151, PubMed:8550525). Catalyzes the interconversion of gamma-hydroxybutyrate (GHB) and succinic semialdehyde (SSA) (PubMed:7606170, PubMed:8328804, PubMed:8550525).</text>
</comment>
<comment type="catalytic activity">
    <reaction evidence="3 4 6">
        <text>4-hydroxybutanoate + NAD(+) = succinate semialdehyde + NADH + H(+)</text>
        <dbReference type="Rhea" id="RHEA:23948"/>
        <dbReference type="ChEBI" id="CHEBI:15378"/>
        <dbReference type="ChEBI" id="CHEBI:16724"/>
        <dbReference type="ChEBI" id="CHEBI:57540"/>
        <dbReference type="ChEBI" id="CHEBI:57706"/>
        <dbReference type="ChEBI" id="CHEBI:57945"/>
        <dbReference type="EC" id="1.1.1.61"/>
    </reaction>
    <physiologicalReaction direction="right-to-left" evidence="3 4 6">
        <dbReference type="Rhea" id="RHEA:23950"/>
    </physiologicalReaction>
</comment>
<comment type="cofactor">
    <cofactor evidence="3">
        <name>Fe(2+)</name>
        <dbReference type="ChEBI" id="CHEBI:29033"/>
    </cofactor>
    <text evidence="3">Binds 1 Fe(2+) ion per subunit.</text>
</comment>
<comment type="cofactor">
    <cofactor evidence="3">
        <name>Cu(2+)</name>
        <dbReference type="ChEBI" id="CHEBI:29036"/>
    </cofactor>
    <text evidence="3">Binds 2 Cu(2+) ions per subunit.</text>
</comment>
<comment type="activity regulation">
    <text evidence="3">Inactivated by oxygen.</text>
</comment>
<comment type="biophysicochemical properties">
    <kinetics>
        <KM evidence="3">0.56 mM for succinic semialdehyde</KM>
        <KM evidence="3">0.15 mM for NADH</KM>
        <KM evidence="3">55 mM for 4-hydroxybutanoate</KM>
        <KM evidence="3">0.67 mM for NAD</KM>
    </kinetics>
    <phDependence>
        <text evidence="3">Optimum pH is 6.1 for the reduction of succinic semialdehyde and pH 9.4 for the oxidation of 4-hydroxybutanoate.</text>
    </phDependence>
</comment>
<comment type="subunit">
    <text evidence="3">Homodimer.</text>
</comment>
<comment type="induction">
    <text evidence="3 4 6">Induced by growth on ethanol plus succinate.</text>
</comment>
<comment type="similarity">
    <text evidence="10">Belongs to the iron-containing alcohol dehydrogenase family.</text>
</comment>
<reference key="1">
    <citation type="journal article" date="1996" name="J. Bacteriol.">
        <title>Molecular analysis of the anaerobic succinate degradation pathway in Clostridium kluyveri.</title>
        <authorList>
            <person name="Soehling B."/>
            <person name="Gottschalk G."/>
        </authorList>
    </citation>
    <scope>NUCLEOTIDE SEQUENCE [GENOMIC DNA]</scope>
    <scope>FUNCTION</scope>
    <scope>CATALYTIC ACTIVITY</scope>
    <scope>INDUCTION</scope>
    <source>
        <strain>ATCC 8527 / DSM 555 / NBRC 12016 / NCIMB 10680 / K1</strain>
    </source>
</reference>
<reference key="2">
    <citation type="journal article" date="2008" name="Proc. Natl. Acad. Sci. U.S.A.">
        <title>The genome of Clostridium kluyveri, a strict anaerobe with unique metabolic features.</title>
        <authorList>
            <person name="Seedorf H."/>
            <person name="Fricke W.F."/>
            <person name="Veith B."/>
            <person name="Brueggemann H."/>
            <person name="Liesegang H."/>
            <person name="Strittmatter A."/>
            <person name="Miethke M."/>
            <person name="Buckel W."/>
            <person name="Hinderberger J."/>
            <person name="Li F."/>
            <person name="Hagemeier C."/>
            <person name="Thauer R.K."/>
            <person name="Gottschalk G."/>
        </authorList>
    </citation>
    <scope>NUCLEOTIDE SEQUENCE [LARGE SCALE GENOMIC DNA]</scope>
    <source>
        <strain>ATCC 8527 / DSM 555 / NBRC 12016 / NCIMB 10680 / K1</strain>
    </source>
</reference>
<reference key="3">
    <citation type="journal article" date="1993" name="Appl. Environ. Microbiol.">
        <title>Dehydrogenases involved in the conversion of succinate to 4-hydroxybutanoate by Clostridium kluyveri.</title>
        <authorList>
            <person name="Wolff R.A."/>
            <person name="Urben G.W."/>
            <person name="O'Herrin S.M."/>
            <person name="Kenealy W.R."/>
        </authorList>
    </citation>
    <scope>FUNCTION</scope>
    <scope>CATALYTIC ACTIVITY</scope>
    <scope>INDUCTION</scope>
    <source>
        <strain>ATCC 8527 / DSM 555 / NBRC 12016 / NCIMB 10680 / K1</strain>
    </source>
</reference>
<reference key="4">
    <citation type="journal article" date="1993" name="Eur. J. Biochem.">
        <title>Purification and characterization of a coenzyme-A-dependent succinate-semialdehyde dehydrogenase from Clostridium kluyveri.</title>
        <authorList>
            <person name="Soehling B."/>
            <person name="Gottschalk G."/>
        </authorList>
    </citation>
    <scope>FUNCTION</scope>
    <source>
        <strain>ATCC 8527 / DSM 555 / NBRC 12016 / NCIMB 10680 / K1</strain>
    </source>
</reference>
<reference key="5">
    <citation type="journal article" date="1995" name="Protein Expr. Purif.">
        <title>Purification and characterization of the oxygen-sensitive 4-hydroxybutanoate dehydrogenase from Clostridium kluyveri.</title>
        <authorList>
            <person name="Wolff R.A."/>
            <person name="Kenealy W.R."/>
        </authorList>
    </citation>
    <scope>FUNCTION</scope>
    <scope>CATALYTIC ACTIVITY</scope>
    <scope>COFACTOR</scope>
    <scope>ACTIVITY REGULATION</scope>
    <scope>BIOPHYSICOCHEMICAL PROPERTIES</scope>
    <scope>SUBUNIT</scope>
    <scope>INDUCTION</scope>
    <source>
        <strain>ATCC 8527 / DSM 555 / NBRC 12016 / NCIMB 10680 / K1</strain>
    </source>
</reference>
<organism>
    <name type="scientific">Clostridium kluyveri (strain ATCC 8527 / DSM 555 / NBRC 12016 / NCIMB 10680 / K1)</name>
    <dbReference type="NCBI Taxonomy" id="431943"/>
    <lineage>
        <taxon>Bacteria</taxon>
        <taxon>Bacillati</taxon>
        <taxon>Bacillota</taxon>
        <taxon>Clostridia</taxon>
        <taxon>Eubacteriales</taxon>
        <taxon>Clostridiaceae</taxon>
        <taxon>Clostridium</taxon>
    </lineage>
</organism>
<accession>P38945</accession>
<accession>A5N1M6</accession>
<gene>
    <name evidence="9" type="primary">4hbD</name>
    <name type="ordered locus">CKL_3014</name>
</gene>
<feature type="chain" id="PRO_0000087840" description="4-hydroxybutyrate dehydrogenase">
    <location>
        <begin position="1"/>
        <end position="371"/>
    </location>
</feature>
<feature type="binding site" evidence="1">
    <location>
        <begin position="88"/>
        <end position="92"/>
    </location>
    <ligand>
        <name>NAD(+)</name>
        <dbReference type="ChEBI" id="CHEBI:57540"/>
    </ligand>
</feature>
<feature type="binding site" evidence="1">
    <location>
        <begin position="126"/>
        <end position="130"/>
    </location>
    <ligand>
        <name>NAD(+)</name>
        <dbReference type="ChEBI" id="CHEBI:57540"/>
    </ligand>
</feature>
<feature type="binding site" evidence="1">
    <location>
        <position position="148"/>
    </location>
    <ligand>
        <name>NAD(+)</name>
        <dbReference type="ChEBI" id="CHEBI:57540"/>
    </ligand>
</feature>
<feature type="binding site" evidence="1">
    <location>
        <position position="182"/>
    </location>
    <ligand>
        <name>Fe cation</name>
        <dbReference type="ChEBI" id="CHEBI:24875"/>
    </ligand>
</feature>
<feature type="binding site" evidence="1">
    <location>
        <position position="186"/>
    </location>
    <ligand>
        <name>Fe cation</name>
        <dbReference type="ChEBI" id="CHEBI:24875"/>
    </ligand>
</feature>
<feature type="binding site" evidence="1">
    <location>
        <position position="253"/>
    </location>
    <ligand>
        <name>Fe cation</name>
        <dbReference type="ChEBI" id="CHEBI:24875"/>
    </ligand>
</feature>
<feature type="binding site" evidence="1">
    <location>
        <position position="267"/>
    </location>
    <ligand>
        <name>Fe cation</name>
        <dbReference type="ChEBI" id="CHEBI:24875"/>
    </ligand>
</feature>
<feature type="binding site" evidence="1">
    <location>
        <position position="267"/>
    </location>
    <ligand>
        <name>NAD(+)</name>
        <dbReference type="ChEBI" id="CHEBI:57540"/>
    </ligand>
</feature>
<protein>
    <recommendedName>
        <fullName evidence="7 8">4-hydroxybutyrate dehydrogenase</fullName>
        <shortName evidence="9">4HbD</shortName>
        <ecNumber evidence="3 4">1.1.1.61</ecNumber>
    </recommendedName>
    <alternativeName>
        <fullName evidence="2">Gamma-hydroxybutyrate dehydrogenase</fullName>
        <shortName evidence="2">GHBDH</shortName>
    </alternativeName>
    <alternativeName>
        <fullName evidence="8">NAD(+)-dependent 4-hydroxybutyrate dehydrogenase</fullName>
    </alternativeName>
</protein>
<sequence>MKLLKLAPDVYKFDTAEEFMKYFKVGKGDFILTNEFLYKPFLEKFNDGADAVFQEKYGLGEPSDEMINNIIKDIGDKQYNRIIAVGGGSVIDIAKILSLKYTDDSLDLFEGKVPLVKNKELIIVPTTCGTGSEVTNVSVAELKRRHTKKGIASDELYATYAVLVPEFIKGLPYKFFVTSSVDALIHATEAYVSPNANPYTDMFSVKAMELILNGYMQMVEKGNDYRVEIIEDFVIGSNYAGIAFGNAGVGAVHALSYPIGGNYHVPHGEANYLFFTEIFKTYYEKNPNGKIKDVNKLLAGILKCDESEAYDSLSQLLDKLLSRKPLREYGMKEEEIETFADSVIEGQQRLLVNNYEPFSREDIVNTYKKLY</sequence>
<dbReference type="EC" id="1.1.1.61" evidence="3 4"/>
<dbReference type="EMBL" id="L21902">
    <property type="protein sequence ID" value="AAA92348.1"/>
    <property type="molecule type" value="Genomic_DNA"/>
</dbReference>
<dbReference type="EMBL" id="CP000673">
    <property type="protein sequence ID" value="EDK35022.1"/>
    <property type="molecule type" value="Genomic_DNA"/>
</dbReference>
<dbReference type="RefSeq" id="WP_012103357.1">
    <property type="nucleotide sequence ID" value="NC_009706.1"/>
</dbReference>
<dbReference type="SMR" id="P38945"/>
<dbReference type="STRING" id="431943.CKL_3014"/>
<dbReference type="KEGG" id="ckl:CKL_3014"/>
<dbReference type="eggNOG" id="COG1454">
    <property type="taxonomic scope" value="Bacteria"/>
</dbReference>
<dbReference type="HOGENOM" id="CLU_007207_0_0_9"/>
<dbReference type="BioCyc" id="MetaCyc:MONOMER-13466"/>
<dbReference type="Proteomes" id="UP000002411">
    <property type="component" value="Chromosome"/>
</dbReference>
<dbReference type="GO" id="GO:0047577">
    <property type="term" value="F:4-hydroxybutyrate dehydrogenase activity"/>
    <property type="evidence" value="ECO:0007669"/>
    <property type="project" value="UniProtKB-EC"/>
</dbReference>
<dbReference type="GO" id="GO:0004022">
    <property type="term" value="F:alcohol dehydrogenase (NAD+) activity"/>
    <property type="evidence" value="ECO:0007669"/>
    <property type="project" value="TreeGrafter"/>
</dbReference>
<dbReference type="GO" id="GO:0046872">
    <property type="term" value="F:metal ion binding"/>
    <property type="evidence" value="ECO:0007669"/>
    <property type="project" value="UniProtKB-KW"/>
</dbReference>
<dbReference type="GO" id="GO:0000166">
    <property type="term" value="F:nucleotide binding"/>
    <property type="evidence" value="ECO:0007669"/>
    <property type="project" value="UniProtKB-KW"/>
</dbReference>
<dbReference type="CDD" id="cd14860">
    <property type="entry name" value="4HBD_NAD"/>
    <property type="match status" value="1"/>
</dbReference>
<dbReference type="Gene3D" id="3.40.50.1970">
    <property type="match status" value="1"/>
</dbReference>
<dbReference type="Gene3D" id="1.20.1090.10">
    <property type="entry name" value="Dehydroquinate synthase-like - alpha domain"/>
    <property type="match status" value="1"/>
</dbReference>
<dbReference type="InterPro" id="IPR001670">
    <property type="entry name" value="ADH_Fe/GldA"/>
</dbReference>
<dbReference type="InterPro" id="IPR056798">
    <property type="entry name" value="ADH_Fe_C"/>
</dbReference>
<dbReference type="InterPro" id="IPR018211">
    <property type="entry name" value="ADH_Fe_CS"/>
</dbReference>
<dbReference type="InterPro" id="IPR039697">
    <property type="entry name" value="Alcohol_dehydrogenase_Fe"/>
</dbReference>
<dbReference type="PANTHER" id="PTHR11496">
    <property type="entry name" value="ALCOHOL DEHYDROGENASE"/>
    <property type="match status" value="1"/>
</dbReference>
<dbReference type="PANTHER" id="PTHR11496:SF83">
    <property type="entry name" value="HYDROXYACID-OXOACID TRANSHYDROGENASE, MITOCHONDRIAL"/>
    <property type="match status" value="1"/>
</dbReference>
<dbReference type="Pfam" id="PF25137">
    <property type="entry name" value="ADH_Fe_C"/>
    <property type="match status" value="1"/>
</dbReference>
<dbReference type="Pfam" id="PF00465">
    <property type="entry name" value="Fe-ADH"/>
    <property type="match status" value="1"/>
</dbReference>
<dbReference type="SUPFAM" id="SSF56796">
    <property type="entry name" value="Dehydroquinate synthase-like"/>
    <property type="match status" value="1"/>
</dbReference>
<dbReference type="PROSITE" id="PS00060">
    <property type="entry name" value="ADH_IRON_2"/>
    <property type="match status" value="1"/>
</dbReference>